<organism>
    <name type="scientific">Clostridium perfringens (strain ATCC 13124 / DSM 756 / JCM 1290 / NCIMB 6125 / NCTC 8237 / Type A)</name>
    <dbReference type="NCBI Taxonomy" id="195103"/>
    <lineage>
        <taxon>Bacteria</taxon>
        <taxon>Bacillati</taxon>
        <taxon>Bacillota</taxon>
        <taxon>Clostridia</taxon>
        <taxon>Eubacteriales</taxon>
        <taxon>Clostridiaceae</taxon>
        <taxon>Clostridium</taxon>
    </lineage>
</organism>
<dbReference type="EC" id="2.8.4.3" evidence="1"/>
<dbReference type="EMBL" id="CP000246">
    <property type="protein sequence ID" value="ABG84213.1"/>
    <property type="molecule type" value="Genomic_DNA"/>
</dbReference>
<dbReference type="RefSeq" id="WP_003449335.1">
    <property type="nucleotide sequence ID" value="NC_008261.1"/>
</dbReference>
<dbReference type="SMR" id="Q0TRE5"/>
<dbReference type="STRING" id="195103.CPF_1349"/>
<dbReference type="PaxDb" id="195103-CPF_1349"/>
<dbReference type="GeneID" id="93002339"/>
<dbReference type="KEGG" id="cpf:CPF_1349"/>
<dbReference type="eggNOG" id="COG0621">
    <property type="taxonomic scope" value="Bacteria"/>
</dbReference>
<dbReference type="HOGENOM" id="CLU_018697_2_0_9"/>
<dbReference type="Proteomes" id="UP000001823">
    <property type="component" value="Chromosome"/>
</dbReference>
<dbReference type="GO" id="GO:0005829">
    <property type="term" value="C:cytosol"/>
    <property type="evidence" value="ECO:0007669"/>
    <property type="project" value="TreeGrafter"/>
</dbReference>
<dbReference type="GO" id="GO:0051539">
    <property type="term" value="F:4 iron, 4 sulfur cluster binding"/>
    <property type="evidence" value="ECO:0007669"/>
    <property type="project" value="UniProtKB-UniRule"/>
</dbReference>
<dbReference type="GO" id="GO:0046872">
    <property type="term" value="F:metal ion binding"/>
    <property type="evidence" value="ECO:0007669"/>
    <property type="project" value="UniProtKB-KW"/>
</dbReference>
<dbReference type="GO" id="GO:0035597">
    <property type="term" value="F:N6-isopentenyladenosine methylthiotransferase activity"/>
    <property type="evidence" value="ECO:0007669"/>
    <property type="project" value="TreeGrafter"/>
</dbReference>
<dbReference type="CDD" id="cd01335">
    <property type="entry name" value="Radical_SAM"/>
    <property type="match status" value="1"/>
</dbReference>
<dbReference type="FunFam" id="3.40.50.12160:FF:000006">
    <property type="entry name" value="tRNA-2-methylthio-N(6)-dimethylallyladenosine synthase"/>
    <property type="match status" value="1"/>
</dbReference>
<dbReference type="FunFam" id="3.80.30.20:FF:000001">
    <property type="entry name" value="tRNA-2-methylthio-N(6)-dimethylallyladenosine synthase 2"/>
    <property type="match status" value="1"/>
</dbReference>
<dbReference type="Gene3D" id="3.40.50.12160">
    <property type="entry name" value="Methylthiotransferase, N-terminal domain"/>
    <property type="match status" value="1"/>
</dbReference>
<dbReference type="Gene3D" id="3.80.30.20">
    <property type="entry name" value="tm_1862 like domain"/>
    <property type="match status" value="1"/>
</dbReference>
<dbReference type="HAMAP" id="MF_01864">
    <property type="entry name" value="tRNA_metthiotr_MiaB"/>
    <property type="match status" value="1"/>
</dbReference>
<dbReference type="InterPro" id="IPR006638">
    <property type="entry name" value="Elp3/MiaA/NifB-like_rSAM"/>
</dbReference>
<dbReference type="InterPro" id="IPR005839">
    <property type="entry name" value="Methylthiotransferase"/>
</dbReference>
<dbReference type="InterPro" id="IPR020612">
    <property type="entry name" value="Methylthiotransferase_CS"/>
</dbReference>
<dbReference type="InterPro" id="IPR013848">
    <property type="entry name" value="Methylthiotransferase_N"/>
</dbReference>
<dbReference type="InterPro" id="IPR038135">
    <property type="entry name" value="Methylthiotransferase_N_sf"/>
</dbReference>
<dbReference type="InterPro" id="IPR006463">
    <property type="entry name" value="MiaB_methiolase"/>
</dbReference>
<dbReference type="InterPro" id="IPR007197">
    <property type="entry name" value="rSAM"/>
</dbReference>
<dbReference type="InterPro" id="IPR023404">
    <property type="entry name" value="rSAM_horseshoe"/>
</dbReference>
<dbReference type="InterPro" id="IPR002792">
    <property type="entry name" value="TRAM_dom"/>
</dbReference>
<dbReference type="NCBIfam" id="TIGR01574">
    <property type="entry name" value="miaB-methiolase"/>
    <property type="match status" value="1"/>
</dbReference>
<dbReference type="NCBIfam" id="TIGR00089">
    <property type="entry name" value="MiaB/RimO family radical SAM methylthiotransferase"/>
    <property type="match status" value="1"/>
</dbReference>
<dbReference type="PANTHER" id="PTHR43020">
    <property type="entry name" value="CDK5 REGULATORY SUBUNIT-ASSOCIATED PROTEIN 1"/>
    <property type="match status" value="1"/>
</dbReference>
<dbReference type="PANTHER" id="PTHR43020:SF2">
    <property type="entry name" value="MITOCHONDRIAL TRNA METHYLTHIOTRANSFERASE CDK5RAP1"/>
    <property type="match status" value="1"/>
</dbReference>
<dbReference type="Pfam" id="PF04055">
    <property type="entry name" value="Radical_SAM"/>
    <property type="match status" value="1"/>
</dbReference>
<dbReference type="Pfam" id="PF01938">
    <property type="entry name" value="TRAM"/>
    <property type="match status" value="1"/>
</dbReference>
<dbReference type="Pfam" id="PF00919">
    <property type="entry name" value="UPF0004"/>
    <property type="match status" value="1"/>
</dbReference>
<dbReference type="SFLD" id="SFLDF00273">
    <property type="entry name" value="(dimethylallyl)adenosine_tRNA"/>
    <property type="match status" value="1"/>
</dbReference>
<dbReference type="SFLD" id="SFLDG01082">
    <property type="entry name" value="B12-binding_domain_containing"/>
    <property type="match status" value="1"/>
</dbReference>
<dbReference type="SFLD" id="SFLDS00029">
    <property type="entry name" value="Radical_SAM"/>
    <property type="match status" value="1"/>
</dbReference>
<dbReference type="SMART" id="SM00729">
    <property type="entry name" value="Elp3"/>
    <property type="match status" value="1"/>
</dbReference>
<dbReference type="SUPFAM" id="SSF102114">
    <property type="entry name" value="Radical SAM enzymes"/>
    <property type="match status" value="1"/>
</dbReference>
<dbReference type="PROSITE" id="PS51449">
    <property type="entry name" value="MTTASE_N"/>
    <property type="match status" value="1"/>
</dbReference>
<dbReference type="PROSITE" id="PS01278">
    <property type="entry name" value="MTTASE_RADICAL"/>
    <property type="match status" value="1"/>
</dbReference>
<dbReference type="PROSITE" id="PS51918">
    <property type="entry name" value="RADICAL_SAM"/>
    <property type="match status" value="1"/>
</dbReference>
<dbReference type="PROSITE" id="PS50926">
    <property type="entry name" value="TRAM"/>
    <property type="match status" value="1"/>
</dbReference>
<keyword id="KW-0004">4Fe-4S</keyword>
<keyword id="KW-0963">Cytoplasm</keyword>
<keyword id="KW-0408">Iron</keyword>
<keyword id="KW-0411">Iron-sulfur</keyword>
<keyword id="KW-0479">Metal-binding</keyword>
<keyword id="KW-0949">S-adenosyl-L-methionine</keyword>
<keyword id="KW-0808">Transferase</keyword>
<keyword id="KW-0819">tRNA processing</keyword>
<name>MIAB_CLOP1</name>
<comment type="function">
    <text evidence="1">Catalyzes the methylthiolation of N6-(dimethylallyl)adenosine (i(6)A), leading to the formation of 2-methylthio-N6-(dimethylallyl)adenosine (ms(2)i(6)A) at position 37 in tRNAs that read codons beginning with uridine.</text>
</comment>
<comment type="catalytic activity">
    <reaction evidence="1">
        <text>N(6)-dimethylallyladenosine(37) in tRNA + (sulfur carrier)-SH + AH2 + 2 S-adenosyl-L-methionine = 2-methylsulfanyl-N(6)-dimethylallyladenosine(37) in tRNA + (sulfur carrier)-H + 5'-deoxyadenosine + L-methionine + A + S-adenosyl-L-homocysteine + 2 H(+)</text>
        <dbReference type="Rhea" id="RHEA:37067"/>
        <dbReference type="Rhea" id="RHEA-COMP:10375"/>
        <dbReference type="Rhea" id="RHEA-COMP:10376"/>
        <dbReference type="Rhea" id="RHEA-COMP:14737"/>
        <dbReference type="Rhea" id="RHEA-COMP:14739"/>
        <dbReference type="ChEBI" id="CHEBI:13193"/>
        <dbReference type="ChEBI" id="CHEBI:15378"/>
        <dbReference type="ChEBI" id="CHEBI:17319"/>
        <dbReference type="ChEBI" id="CHEBI:17499"/>
        <dbReference type="ChEBI" id="CHEBI:29917"/>
        <dbReference type="ChEBI" id="CHEBI:57844"/>
        <dbReference type="ChEBI" id="CHEBI:57856"/>
        <dbReference type="ChEBI" id="CHEBI:59789"/>
        <dbReference type="ChEBI" id="CHEBI:64428"/>
        <dbReference type="ChEBI" id="CHEBI:74415"/>
        <dbReference type="ChEBI" id="CHEBI:74417"/>
        <dbReference type="EC" id="2.8.4.3"/>
    </reaction>
</comment>
<comment type="cofactor">
    <cofactor evidence="1">
        <name>[4Fe-4S] cluster</name>
        <dbReference type="ChEBI" id="CHEBI:49883"/>
    </cofactor>
    <text evidence="1">Binds 2 [4Fe-4S] clusters. One cluster is coordinated with 3 cysteines and an exchangeable S-adenosyl-L-methionine.</text>
</comment>
<comment type="subunit">
    <text evidence="1">Monomer.</text>
</comment>
<comment type="subcellular location">
    <subcellularLocation>
        <location evidence="1">Cytoplasm</location>
    </subcellularLocation>
</comment>
<comment type="similarity">
    <text evidence="1">Belongs to the methylthiotransferase family. MiaB subfamily.</text>
</comment>
<protein>
    <recommendedName>
        <fullName evidence="1">tRNA-2-methylthio-N(6)-dimethylallyladenosine synthase</fullName>
        <ecNumber evidence="1">2.8.4.3</ecNumber>
    </recommendedName>
    <alternativeName>
        <fullName evidence="1">(Dimethylallyl)adenosine tRNA methylthiotransferase MiaB</fullName>
    </alternativeName>
    <alternativeName>
        <fullName evidence="1">tRNA-i(6)A37 methylthiotransferase</fullName>
    </alternativeName>
</protein>
<sequence>MTLENNMDKKLFCISTYGCQMNEEDSEKLSGMLKSQGYERTENKEEASIIIFNTCCVRENAENKVFGNLGQLKQLKKKNPNLVIAICGCMMQQVGMADKVLKTFPYVDIIFGTHNAHKFPEYLHRVLQEGVQVKEILNKEEGIVEGLPIDRKSDVKAFVTIMYGCNNFCTYCIVPYVRGRERSRKSEDIIKEIEELVSQGYKEITLLGQNVNSYGKGLEEDIDFAGLLRKVNEVKGLERVRFMTSHPKDLSDDVIMAIKECDKLCEQVHLPVQSGSSRILKEMNRHYDREYYLDLVKKIKSEIPDVTLTTDIIIGFPGETEEDFLDTLSLCEEVGYDSAFTFIYSRRNHTPADKMENQIPDDIKHDRFNRLVEAINKKVVIKNKEYEGKVVEVLVEGPSKNDETKLTGRTRNGKLVNFAGDEKLVGELVNLKIVRAQPFSLIGEIVE</sequence>
<proteinExistence type="inferred from homology"/>
<accession>Q0TRE5</accession>
<evidence type="ECO:0000255" key="1">
    <source>
        <dbReference type="HAMAP-Rule" id="MF_01864"/>
    </source>
</evidence>
<evidence type="ECO:0000255" key="2">
    <source>
        <dbReference type="PROSITE-ProRule" id="PRU01266"/>
    </source>
</evidence>
<reference key="1">
    <citation type="journal article" date="2006" name="Genome Res.">
        <title>Skewed genomic variability in strains of the toxigenic bacterial pathogen, Clostridium perfringens.</title>
        <authorList>
            <person name="Myers G.S.A."/>
            <person name="Rasko D.A."/>
            <person name="Cheung J.K."/>
            <person name="Ravel J."/>
            <person name="Seshadri R."/>
            <person name="DeBoy R.T."/>
            <person name="Ren Q."/>
            <person name="Varga J."/>
            <person name="Awad M.M."/>
            <person name="Brinkac L.M."/>
            <person name="Daugherty S.C."/>
            <person name="Haft D.H."/>
            <person name="Dodson R.J."/>
            <person name="Madupu R."/>
            <person name="Nelson W.C."/>
            <person name="Rosovitz M.J."/>
            <person name="Sullivan S.A."/>
            <person name="Khouri H."/>
            <person name="Dimitrov G.I."/>
            <person name="Watkins K.L."/>
            <person name="Mulligan S."/>
            <person name="Benton J."/>
            <person name="Radune D."/>
            <person name="Fisher D.J."/>
            <person name="Atkins H.S."/>
            <person name="Hiscox T."/>
            <person name="Jost B.H."/>
            <person name="Billington S.J."/>
            <person name="Songer J.G."/>
            <person name="McClane B.A."/>
            <person name="Titball R.W."/>
            <person name="Rood J.I."/>
            <person name="Melville S.B."/>
            <person name="Paulsen I.T."/>
        </authorList>
    </citation>
    <scope>NUCLEOTIDE SEQUENCE [LARGE SCALE GENOMIC DNA]</scope>
    <source>
        <strain>ATCC 13124 / DSM 756 / JCM 1290 / NCIMB 6125 / NCTC 8237 / S 107 / Type A</strain>
    </source>
</reference>
<gene>
    <name evidence="1" type="primary">miaB</name>
    <name type="ordered locus">CPF_1349</name>
</gene>
<feature type="chain" id="PRO_0000374231" description="tRNA-2-methylthio-N(6)-dimethylallyladenosine synthase">
    <location>
        <begin position="1"/>
        <end position="447"/>
    </location>
</feature>
<feature type="domain" description="MTTase N-terminal" evidence="1">
    <location>
        <begin position="10"/>
        <end position="128"/>
    </location>
</feature>
<feature type="domain" description="Radical SAM core" evidence="2">
    <location>
        <begin position="151"/>
        <end position="382"/>
    </location>
</feature>
<feature type="domain" description="TRAM" evidence="1">
    <location>
        <begin position="384"/>
        <end position="447"/>
    </location>
</feature>
<feature type="binding site" evidence="1">
    <location>
        <position position="19"/>
    </location>
    <ligand>
        <name>[4Fe-4S] cluster</name>
        <dbReference type="ChEBI" id="CHEBI:49883"/>
        <label>1</label>
    </ligand>
</feature>
<feature type="binding site" evidence="1">
    <location>
        <position position="55"/>
    </location>
    <ligand>
        <name>[4Fe-4S] cluster</name>
        <dbReference type="ChEBI" id="CHEBI:49883"/>
        <label>1</label>
    </ligand>
</feature>
<feature type="binding site" evidence="1">
    <location>
        <position position="89"/>
    </location>
    <ligand>
        <name>[4Fe-4S] cluster</name>
        <dbReference type="ChEBI" id="CHEBI:49883"/>
        <label>1</label>
    </ligand>
</feature>
<feature type="binding site" evidence="1">
    <location>
        <position position="165"/>
    </location>
    <ligand>
        <name>[4Fe-4S] cluster</name>
        <dbReference type="ChEBI" id="CHEBI:49883"/>
        <label>2</label>
        <note>4Fe-4S-S-AdoMet</note>
    </ligand>
</feature>
<feature type="binding site" evidence="1">
    <location>
        <position position="169"/>
    </location>
    <ligand>
        <name>[4Fe-4S] cluster</name>
        <dbReference type="ChEBI" id="CHEBI:49883"/>
        <label>2</label>
        <note>4Fe-4S-S-AdoMet</note>
    </ligand>
</feature>
<feature type="binding site" evidence="1">
    <location>
        <position position="172"/>
    </location>
    <ligand>
        <name>[4Fe-4S] cluster</name>
        <dbReference type="ChEBI" id="CHEBI:49883"/>
        <label>2</label>
        <note>4Fe-4S-S-AdoMet</note>
    </ligand>
</feature>